<gene>
    <name evidence="1" type="primary">dtd</name>
    <name type="ordered locus">Cthe_1343</name>
</gene>
<protein>
    <recommendedName>
        <fullName evidence="1">D-aminoacyl-tRNA deacylase</fullName>
        <shortName evidence="1">DTD</shortName>
        <ecNumber evidence="1">3.1.1.96</ecNumber>
    </recommendedName>
    <alternativeName>
        <fullName evidence="1">Gly-tRNA(Ala) deacylase</fullName>
    </alternativeName>
</protein>
<comment type="function">
    <text evidence="1">An aminoacyl-tRNA editing enzyme that deacylates mischarged D-aminoacyl-tRNAs. Also deacylates mischarged glycyl-tRNA(Ala), protecting cells against glycine mischarging by AlaRS. Acts via tRNA-based rather than protein-based catalysis; rejects L-amino acids rather than detecting D-amino acids in the active site. By recycling D-aminoacyl-tRNA to D-amino acids and free tRNA molecules, this enzyme counteracts the toxicity associated with the formation of D-aminoacyl-tRNA entities in vivo and helps enforce protein L-homochirality.</text>
</comment>
<comment type="catalytic activity">
    <reaction evidence="1">
        <text>glycyl-tRNA(Ala) + H2O = tRNA(Ala) + glycine + H(+)</text>
        <dbReference type="Rhea" id="RHEA:53744"/>
        <dbReference type="Rhea" id="RHEA-COMP:9657"/>
        <dbReference type="Rhea" id="RHEA-COMP:13640"/>
        <dbReference type="ChEBI" id="CHEBI:15377"/>
        <dbReference type="ChEBI" id="CHEBI:15378"/>
        <dbReference type="ChEBI" id="CHEBI:57305"/>
        <dbReference type="ChEBI" id="CHEBI:78442"/>
        <dbReference type="ChEBI" id="CHEBI:78522"/>
        <dbReference type="EC" id="3.1.1.96"/>
    </reaction>
</comment>
<comment type="catalytic activity">
    <reaction evidence="1">
        <text>a D-aminoacyl-tRNA + H2O = a tRNA + a D-alpha-amino acid + H(+)</text>
        <dbReference type="Rhea" id="RHEA:13953"/>
        <dbReference type="Rhea" id="RHEA-COMP:10123"/>
        <dbReference type="Rhea" id="RHEA-COMP:10124"/>
        <dbReference type="ChEBI" id="CHEBI:15377"/>
        <dbReference type="ChEBI" id="CHEBI:15378"/>
        <dbReference type="ChEBI" id="CHEBI:59871"/>
        <dbReference type="ChEBI" id="CHEBI:78442"/>
        <dbReference type="ChEBI" id="CHEBI:79333"/>
        <dbReference type="EC" id="3.1.1.96"/>
    </reaction>
</comment>
<comment type="subunit">
    <text evidence="1">Homodimer.</text>
</comment>
<comment type="subcellular location">
    <subcellularLocation>
        <location evidence="1">Cytoplasm</location>
    </subcellularLocation>
</comment>
<comment type="domain">
    <text evidence="1">A Gly-cisPro motif from one monomer fits into the active site of the other monomer to allow specific chiral rejection of L-amino acids.</text>
</comment>
<comment type="similarity">
    <text evidence="1">Belongs to the DTD family.</text>
</comment>
<keyword id="KW-0963">Cytoplasm</keyword>
<keyword id="KW-0378">Hydrolase</keyword>
<keyword id="KW-1185">Reference proteome</keyword>
<keyword id="KW-0694">RNA-binding</keyword>
<keyword id="KW-0820">tRNA-binding</keyword>
<name>DTD_ACET2</name>
<accession>A3DF46</accession>
<evidence type="ECO:0000255" key="1">
    <source>
        <dbReference type="HAMAP-Rule" id="MF_00518"/>
    </source>
</evidence>
<dbReference type="EC" id="3.1.1.96" evidence="1"/>
<dbReference type="EMBL" id="CP000568">
    <property type="protein sequence ID" value="ABN52575.1"/>
    <property type="molecule type" value="Genomic_DNA"/>
</dbReference>
<dbReference type="RefSeq" id="WP_003517065.1">
    <property type="nucleotide sequence ID" value="NC_009012.1"/>
</dbReference>
<dbReference type="SMR" id="A3DF46"/>
<dbReference type="STRING" id="203119.Cthe_1343"/>
<dbReference type="GeneID" id="35802954"/>
<dbReference type="KEGG" id="cth:Cthe_1343"/>
<dbReference type="eggNOG" id="COG1490">
    <property type="taxonomic scope" value="Bacteria"/>
</dbReference>
<dbReference type="HOGENOM" id="CLU_076901_1_0_9"/>
<dbReference type="OrthoDB" id="9801395at2"/>
<dbReference type="Proteomes" id="UP000002145">
    <property type="component" value="Chromosome"/>
</dbReference>
<dbReference type="GO" id="GO:0005737">
    <property type="term" value="C:cytoplasm"/>
    <property type="evidence" value="ECO:0007669"/>
    <property type="project" value="UniProtKB-SubCell"/>
</dbReference>
<dbReference type="GO" id="GO:0051500">
    <property type="term" value="F:D-tyrosyl-tRNA(Tyr) deacylase activity"/>
    <property type="evidence" value="ECO:0007669"/>
    <property type="project" value="TreeGrafter"/>
</dbReference>
<dbReference type="GO" id="GO:0106026">
    <property type="term" value="F:Gly-tRNA(Ala) deacylase activity"/>
    <property type="evidence" value="ECO:0007669"/>
    <property type="project" value="UniProtKB-UniRule"/>
</dbReference>
<dbReference type="GO" id="GO:0043908">
    <property type="term" value="F:Ser(Gly)-tRNA(Ala) hydrolase activity"/>
    <property type="evidence" value="ECO:0007669"/>
    <property type="project" value="UniProtKB-UniRule"/>
</dbReference>
<dbReference type="GO" id="GO:0000049">
    <property type="term" value="F:tRNA binding"/>
    <property type="evidence" value="ECO:0007669"/>
    <property type="project" value="UniProtKB-UniRule"/>
</dbReference>
<dbReference type="GO" id="GO:0019478">
    <property type="term" value="P:D-amino acid catabolic process"/>
    <property type="evidence" value="ECO:0007669"/>
    <property type="project" value="UniProtKB-UniRule"/>
</dbReference>
<dbReference type="CDD" id="cd00563">
    <property type="entry name" value="Dtyr_deacylase"/>
    <property type="match status" value="1"/>
</dbReference>
<dbReference type="FunFam" id="3.50.80.10:FF:000001">
    <property type="entry name" value="D-aminoacyl-tRNA deacylase"/>
    <property type="match status" value="1"/>
</dbReference>
<dbReference type="Gene3D" id="3.50.80.10">
    <property type="entry name" value="D-tyrosyl-tRNA(Tyr) deacylase"/>
    <property type="match status" value="1"/>
</dbReference>
<dbReference type="HAMAP" id="MF_00518">
    <property type="entry name" value="Deacylase_Dtd"/>
    <property type="match status" value="1"/>
</dbReference>
<dbReference type="InterPro" id="IPR003732">
    <property type="entry name" value="Daa-tRNA_deacyls_DTD"/>
</dbReference>
<dbReference type="InterPro" id="IPR023509">
    <property type="entry name" value="DTD-like_sf"/>
</dbReference>
<dbReference type="NCBIfam" id="TIGR00256">
    <property type="entry name" value="D-aminoacyl-tRNA deacylase"/>
    <property type="match status" value="1"/>
</dbReference>
<dbReference type="PANTHER" id="PTHR10472:SF5">
    <property type="entry name" value="D-AMINOACYL-TRNA DEACYLASE 1"/>
    <property type="match status" value="1"/>
</dbReference>
<dbReference type="PANTHER" id="PTHR10472">
    <property type="entry name" value="D-TYROSYL-TRNA TYR DEACYLASE"/>
    <property type="match status" value="1"/>
</dbReference>
<dbReference type="Pfam" id="PF02580">
    <property type="entry name" value="Tyr_Deacylase"/>
    <property type="match status" value="1"/>
</dbReference>
<dbReference type="SUPFAM" id="SSF69500">
    <property type="entry name" value="DTD-like"/>
    <property type="match status" value="1"/>
</dbReference>
<reference key="1">
    <citation type="submission" date="2007-02" db="EMBL/GenBank/DDBJ databases">
        <title>Complete sequence of Clostridium thermocellum ATCC 27405.</title>
        <authorList>
            <consortium name="US DOE Joint Genome Institute"/>
            <person name="Copeland A."/>
            <person name="Lucas S."/>
            <person name="Lapidus A."/>
            <person name="Barry K."/>
            <person name="Detter J.C."/>
            <person name="Glavina del Rio T."/>
            <person name="Hammon N."/>
            <person name="Israni S."/>
            <person name="Dalin E."/>
            <person name="Tice H."/>
            <person name="Pitluck S."/>
            <person name="Chertkov O."/>
            <person name="Brettin T."/>
            <person name="Bruce D."/>
            <person name="Han C."/>
            <person name="Tapia R."/>
            <person name="Gilna P."/>
            <person name="Schmutz J."/>
            <person name="Larimer F."/>
            <person name="Land M."/>
            <person name="Hauser L."/>
            <person name="Kyrpides N."/>
            <person name="Mikhailova N."/>
            <person name="Wu J.H.D."/>
            <person name="Newcomb M."/>
            <person name="Richardson P."/>
        </authorList>
    </citation>
    <scope>NUCLEOTIDE SEQUENCE [LARGE SCALE GENOMIC DNA]</scope>
    <source>
        <strain>ATCC 27405 / DSM 1237 / JCM 9322 / NBRC 103400 / NCIMB 10682 / NRRL B-4536 / VPI 7372</strain>
    </source>
</reference>
<feature type="chain" id="PRO_1000050828" description="D-aminoacyl-tRNA deacylase">
    <location>
        <begin position="1"/>
        <end position="149"/>
    </location>
</feature>
<feature type="short sequence motif" description="Gly-cisPro motif, important for rejection of L-amino acids" evidence="1">
    <location>
        <begin position="137"/>
        <end position="138"/>
    </location>
</feature>
<proteinExistence type="inferred from homology"/>
<organism>
    <name type="scientific">Acetivibrio thermocellus (strain ATCC 27405 / DSM 1237 / JCM 9322 / NBRC 103400 / NCIMB 10682 / NRRL B-4536 / VPI 7372)</name>
    <name type="common">Clostridium thermocellum</name>
    <dbReference type="NCBI Taxonomy" id="203119"/>
    <lineage>
        <taxon>Bacteria</taxon>
        <taxon>Bacillati</taxon>
        <taxon>Bacillota</taxon>
        <taxon>Clostridia</taxon>
        <taxon>Eubacteriales</taxon>
        <taxon>Oscillospiraceae</taxon>
        <taxon>Acetivibrio</taxon>
    </lineage>
</organism>
<sequence length="149" mass="16733">MRAVVQRVTFSKVTVEGEIVGEIGKGLTVLLGVGCDDTEKDVEYLADKIVNLRIFEDENGKMNLSLKDVGGELLVVSQFTLYGDCRKGKRPSFDRAARPDTAKELYEKFVELCRSYDVKVETGKFQAMMMVEIHNDGPVTMLIDSKKEF</sequence>